<proteinExistence type="inferred from homology"/>
<dbReference type="EMBL" id="CP000703">
    <property type="protein sequence ID" value="ABQ49684.1"/>
    <property type="molecule type" value="Genomic_DNA"/>
</dbReference>
<dbReference type="RefSeq" id="WP_000992518.1">
    <property type="nucleotide sequence ID" value="NC_009487.1"/>
</dbReference>
<dbReference type="SMR" id="A5IU11"/>
<dbReference type="KEGG" id="saj:SaurJH9_1899"/>
<dbReference type="HOGENOM" id="CLU_042384_0_0_9"/>
<dbReference type="GO" id="GO:0005886">
    <property type="term" value="C:plasma membrane"/>
    <property type="evidence" value="ECO:0007669"/>
    <property type="project" value="UniProtKB-SubCell"/>
</dbReference>
<dbReference type="InterPro" id="IPR007383">
    <property type="entry name" value="DUF445"/>
</dbReference>
<dbReference type="InterPro" id="IPR016991">
    <property type="entry name" value="UCP032178"/>
</dbReference>
<dbReference type="PANTHER" id="PTHR35791">
    <property type="entry name" value="UPF0754 MEMBRANE PROTEIN YHEB"/>
    <property type="match status" value="1"/>
</dbReference>
<dbReference type="PANTHER" id="PTHR35791:SF1">
    <property type="entry name" value="UPF0754 MEMBRANE PROTEIN YHEB"/>
    <property type="match status" value="1"/>
</dbReference>
<dbReference type="Pfam" id="PF04286">
    <property type="entry name" value="DUF445"/>
    <property type="match status" value="1"/>
</dbReference>
<dbReference type="PIRSF" id="PIRSF032178">
    <property type="entry name" value="UCP032178"/>
    <property type="match status" value="1"/>
</dbReference>
<name>Y1899_STAA9</name>
<evidence type="ECO:0000250" key="1"/>
<evidence type="ECO:0000255" key="2"/>
<evidence type="ECO:0000305" key="3"/>
<protein>
    <recommendedName>
        <fullName>UPF0754 membrane protein SaurJH9_1899</fullName>
    </recommendedName>
</protein>
<organism>
    <name type="scientific">Staphylococcus aureus (strain JH9)</name>
    <dbReference type="NCBI Taxonomy" id="359786"/>
    <lineage>
        <taxon>Bacteria</taxon>
        <taxon>Bacillati</taxon>
        <taxon>Bacillota</taxon>
        <taxon>Bacilli</taxon>
        <taxon>Bacillales</taxon>
        <taxon>Staphylococcaceae</taxon>
        <taxon>Staphylococcus</taxon>
    </lineage>
</organism>
<comment type="subcellular location">
    <subcellularLocation>
        <location evidence="1">Cell membrane</location>
        <topology evidence="1">Multi-pass membrane protein</topology>
    </subcellularLocation>
</comment>
<comment type="similarity">
    <text evidence="3">Belongs to the UPF0754 family.</text>
</comment>
<accession>A5IU11</accession>
<reference key="1">
    <citation type="submission" date="2007-05" db="EMBL/GenBank/DDBJ databases">
        <title>Complete sequence of chromosome of Staphylococcus aureus subsp. aureus JH9.</title>
        <authorList>
            <consortium name="US DOE Joint Genome Institute"/>
            <person name="Copeland A."/>
            <person name="Lucas S."/>
            <person name="Lapidus A."/>
            <person name="Barry K."/>
            <person name="Detter J.C."/>
            <person name="Glavina del Rio T."/>
            <person name="Hammon N."/>
            <person name="Israni S."/>
            <person name="Pitluck S."/>
            <person name="Chain P."/>
            <person name="Malfatti S."/>
            <person name="Shin M."/>
            <person name="Vergez L."/>
            <person name="Schmutz J."/>
            <person name="Larimer F."/>
            <person name="Land M."/>
            <person name="Hauser L."/>
            <person name="Kyrpides N."/>
            <person name="Kim E."/>
            <person name="Tomasz A."/>
            <person name="Richardson P."/>
        </authorList>
    </citation>
    <scope>NUCLEOTIDE SEQUENCE [LARGE SCALE GENOMIC DNA]</scope>
    <source>
        <strain>JH9</strain>
    </source>
</reference>
<feature type="chain" id="PRO_0000388307" description="UPF0754 membrane protein SaurJH9_1899">
    <location>
        <begin position="1"/>
        <end position="374"/>
    </location>
</feature>
<feature type="transmembrane region" description="Helical" evidence="2">
    <location>
        <begin position="4"/>
        <end position="24"/>
    </location>
</feature>
<feature type="transmembrane region" description="Helical" evidence="2">
    <location>
        <begin position="354"/>
        <end position="374"/>
    </location>
</feature>
<sequence>MNALFIIIFMIVVGAIIGGITNVIAIRMLFHPFKPYYIFKFRVPFTPGLIPKRREEIATKIGQVIEEHLLTETLINEKLKSEQSQQAIESMIQQQLQKLTKDQLSIKQITSQIDIDLEQVLQTNGNQYIESQLNNYYTKHQNQTIASLLPNQLVTFLDQHVDNATDLLCDRARNYLSSAKGTQDINDMLDTFFHEKGKLIGMLQMFMTKESIADRIQQELIRLTSHPKARTIVTSLITNEYQTFKDKPLNELLDASQFNEIAENLSVYVTTYASNQANKPVVTLMPQFVDYLEGQLSSKLANLIIEKLSIHLSTIMKKVDLRGLIEEQINTFDLDYIEKLIIEIANKELKLIMSLGFILGGIIGFFQGLVAIFV</sequence>
<keyword id="KW-1003">Cell membrane</keyword>
<keyword id="KW-0472">Membrane</keyword>
<keyword id="KW-0812">Transmembrane</keyword>
<keyword id="KW-1133">Transmembrane helix</keyword>
<gene>
    <name type="ordered locus">SaurJH9_1899</name>
</gene>